<organism>
    <name type="scientific">Salmonella dublin (strain CT_02021853)</name>
    <dbReference type="NCBI Taxonomy" id="439851"/>
    <lineage>
        <taxon>Bacteria</taxon>
        <taxon>Pseudomonadati</taxon>
        <taxon>Pseudomonadota</taxon>
        <taxon>Gammaproteobacteria</taxon>
        <taxon>Enterobacterales</taxon>
        <taxon>Enterobacteriaceae</taxon>
        <taxon>Salmonella</taxon>
    </lineage>
</organism>
<sequence>MAKEFGRPQRVAQEMQKEIAIILQREIKDPRLGMMTTVSGVEMSRDLAYAKVFVTFLNDKDEDAVKAGIKALQEASGFIRSLLGKAMRLRIVPELTFFYDNSLVEGMRMSNLVTNVVKHDEERRVNPDDSKED</sequence>
<comment type="function">
    <text evidence="1">One of several proteins that assist in the late maturation steps of the functional core of the 30S ribosomal subunit. Associates with free 30S ribosomal subunits (but not with 30S subunits that are part of 70S ribosomes or polysomes). Required for efficient processing of 16S rRNA. May interact with the 5'-terminal helix region of 16S rRNA.</text>
</comment>
<comment type="subunit">
    <text evidence="1">Monomer. Binds 30S ribosomal subunits, but not 50S ribosomal subunits or 70S ribosomes.</text>
</comment>
<comment type="subcellular location">
    <subcellularLocation>
        <location evidence="1">Cytoplasm</location>
    </subcellularLocation>
</comment>
<comment type="similarity">
    <text evidence="1">Belongs to the RbfA family.</text>
</comment>
<proteinExistence type="inferred from homology"/>
<protein>
    <recommendedName>
        <fullName evidence="1">Ribosome-binding factor A</fullName>
    </recommendedName>
</protein>
<feature type="chain" id="PRO_1000088924" description="Ribosome-binding factor A">
    <location>
        <begin position="1"/>
        <end position="133"/>
    </location>
</feature>
<evidence type="ECO:0000255" key="1">
    <source>
        <dbReference type="HAMAP-Rule" id="MF_00003"/>
    </source>
</evidence>
<keyword id="KW-0963">Cytoplasm</keyword>
<keyword id="KW-0690">Ribosome biogenesis</keyword>
<reference key="1">
    <citation type="journal article" date="2011" name="J. Bacteriol.">
        <title>Comparative genomics of 28 Salmonella enterica isolates: evidence for CRISPR-mediated adaptive sublineage evolution.</title>
        <authorList>
            <person name="Fricke W.F."/>
            <person name="Mammel M.K."/>
            <person name="McDermott P.F."/>
            <person name="Tartera C."/>
            <person name="White D.G."/>
            <person name="Leclerc J.E."/>
            <person name="Ravel J."/>
            <person name="Cebula T.A."/>
        </authorList>
    </citation>
    <scope>NUCLEOTIDE SEQUENCE [LARGE SCALE GENOMIC DNA]</scope>
    <source>
        <strain>CT_02021853</strain>
    </source>
</reference>
<dbReference type="EMBL" id="CP001144">
    <property type="protein sequence ID" value="ACH74970.1"/>
    <property type="molecule type" value="Genomic_DNA"/>
</dbReference>
<dbReference type="RefSeq" id="WP_001040199.1">
    <property type="nucleotide sequence ID" value="NC_011205.1"/>
</dbReference>
<dbReference type="SMR" id="B5FI12"/>
<dbReference type="KEGG" id="sed:SeD_A3642"/>
<dbReference type="HOGENOM" id="CLU_089475_5_0_6"/>
<dbReference type="Proteomes" id="UP000008322">
    <property type="component" value="Chromosome"/>
</dbReference>
<dbReference type="GO" id="GO:0005829">
    <property type="term" value="C:cytosol"/>
    <property type="evidence" value="ECO:0007669"/>
    <property type="project" value="TreeGrafter"/>
</dbReference>
<dbReference type="GO" id="GO:0043024">
    <property type="term" value="F:ribosomal small subunit binding"/>
    <property type="evidence" value="ECO:0007669"/>
    <property type="project" value="TreeGrafter"/>
</dbReference>
<dbReference type="GO" id="GO:0030490">
    <property type="term" value="P:maturation of SSU-rRNA"/>
    <property type="evidence" value="ECO:0007669"/>
    <property type="project" value="UniProtKB-UniRule"/>
</dbReference>
<dbReference type="FunFam" id="3.30.300.20:FF:000007">
    <property type="entry name" value="Ribosome-binding factor A"/>
    <property type="match status" value="1"/>
</dbReference>
<dbReference type="Gene3D" id="3.30.300.20">
    <property type="match status" value="1"/>
</dbReference>
<dbReference type="HAMAP" id="MF_00003">
    <property type="entry name" value="RbfA"/>
    <property type="match status" value="1"/>
</dbReference>
<dbReference type="InterPro" id="IPR015946">
    <property type="entry name" value="KH_dom-like_a/b"/>
</dbReference>
<dbReference type="InterPro" id="IPR000238">
    <property type="entry name" value="RbfA"/>
</dbReference>
<dbReference type="InterPro" id="IPR023799">
    <property type="entry name" value="RbfA_dom_sf"/>
</dbReference>
<dbReference type="InterPro" id="IPR020053">
    <property type="entry name" value="Ribosome-bd_factorA_CS"/>
</dbReference>
<dbReference type="NCBIfam" id="TIGR00082">
    <property type="entry name" value="rbfA"/>
    <property type="match status" value="1"/>
</dbReference>
<dbReference type="PANTHER" id="PTHR33515">
    <property type="entry name" value="RIBOSOME-BINDING FACTOR A, CHLOROPLASTIC-RELATED"/>
    <property type="match status" value="1"/>
</dbReference>
<dbReference type="PANTHER" id="PTHR33515:SF1">
    <property type="entry name" value="RIBOSOME-BINDING FACTOR A, CHLOROPLASTIC-RELATED"/>
    <property type="match status" value="1"/>
</dbReference>
<dbReference type="Pfam" id="PF02033">
    <property type="entry name" value="RBFA"/>
    <property type="match status" value="1"/>
</dbReference>
<dbReference type="SUPFAM" id="SSF89919">
    <property type="entry name" value="Ribosome-binding factor A, RbfA"/>
    <property type="match status" value="1"/>
</dbReference>
<dbReference type="PROSITE" id="PS01319">
    <property type="entry name" value="RBFA"/>
    <property type="match status" value="1"/>
</dbReference>
<name>RBFA_SALDC</name>
<gene>
    <name evidence="1" type="primary">rbfA</name>
    <name type="ordered locus">SeD_A3642</name>
</gene>
<accession>B5FI12</accession>